<feature type="transit peptide" description="Chloroplast" evidence="2">
    <location>
        <begin position="1"/>
        <end position="68"/>
    </location>
</feature>
<feature type="chain" id="PRO_0000401369" description="Nitrogen regulatory protein P-II homolog">
    <location>
        <begin position="69"/>
        <end position="212"/>
    </location>
</feature>
<feature type="region of interest" description="Disordered" evidence="4">
    <location>
        <begin position="1"/>
        <end position="74"/>
    </location>
</feature>
<feature type="compositionally biased region" description="Low complexity" evidence="4">
    <location>
        <begin position="1"/>
        <end position="12"/>
    </location>
</feature>
<feature type="compositionally biased region" description="Low complexity" evidence="4">
    <location>
        <begin position="32"/>
        <end position="46"/>
    </location>
</feature>
<feature type="compositionally biased region" description="Low complexity" evidence="4">
    <location>
        <begin position="63"/>
        <end position="74"/>
    </location>
</feature>
<feature type="binding site" evidence="1">
    <location>
        <begin position="117"/>
        <end position="121"/>
    </location>
    <ligand>
        <name>ATP</name>
        <dbReference type="ChEBI" id="CHEBI:30616"/>
    </ligand>
</feature>
<feature type="binding site" evidence="1">
    <location>
        <position position="119"/>
    </location>
    <ligand>
        <name>Mg(2+)</name>
        <dbReference type="ChEBI" id="CHEBI:18420"/>
    </ligand>
</feature>
<feature type="binding site" evidence="1">
    <location>
        <begin position="170"/>
        <end position="173"/>
    </location>
    <ligand>
        <name>ATP</name>
        <dbReference type="ChEBI" id="CHEBI:30616"/>
    </ligand>
</feature>
<protein>
    <recommendedName>
        <fullName>Nitrogen regulatory protein P-II homolog</fullName>
    </recommendedName>
    <alternativeName>
        <fullName>Protein PII-like</fullName>
    </alternativeName>
</protein>
<gene>
    <name type="primary">GLB</name>
    <name type="synonym">GLB1</name>
    <name type="ordered locus">Os05g0133100</name>
    <name type="ordered locus">LOC_Os05g04220</name>
    <name type="ORF">OsJ_17013</name>
    <name type="ORF">OSJNBa0077L08.6</name>
</gene>
<comment type="function">
    <text evidence="1">Participates in sensing carbon and organic nitrogen status and regulates some steps of primary carbon and nitrogen metabolism.</text>
</comment>
<comment type="subunit">
    <text evidence="1">Homodimer.</text>
</comment>
<comment type="subcellular location">
    <subcellularLocation>
        <location evidence="3">Plastid</location>
        <location evidence="3">Chloroplast</location>
    </subcellularLocation>
</comment>
<comment type="similarity">
    <text evidence="3">Belongs to the P(II) protein family.</text>
</comment>
<dbReference type="EMBL" id="AB119279">
    <property type="protein sequence ID" value="BAD88531.1"/>
    <property type="molecule type" value="mRNA"/>
</dbReference>
<dbReference type="EMBL" id="AC118288">
    <property type="protein sequence ID" value="AAT85171.1"/>
    <property type="molecule type" value="Genomic_DNA"/>
</dbReference>
<dbReference type="EMBL" id="AP008211">
    <property type="protein sequence ID" value="BAF16476.1"/>
    <property type="molecule type" value="Genomic_DNA"/>
</dbReference>
<dbReference type="EMBL" id="AP014961">
    <property type="protein sequence ID" value="BAS92130.1"/>
    <property type="molecule type" value="Genomic_DNA"/>
</dbReference>
<dbReference type="EMBL" id="CM000142">
    <property type="protein sequence ID" value="EEE62226.1"/>
    <property type="molecule type" value="Genomic_DNA"/>
</dbReference>
<dbReference type="EMBL" id="AK068407">
    <property type="protein sequence ID" value="BAG90896.1"/>
    <property type="molecule type" value="mRNA"/>
</dbReference>
<dbReference type="EMBL" id="AK099152">
    <property type="protein sequence ID" value="BAG93955.1"/>
    <property type="molecule type" value="mRNA"/>
</dbReference>
<dbReference type="RefSeq" id="XP_015637847.1">
    <property type="nucleotide sequence ID" value="XM_015782361.1"/>
</dbReference>
<dbReference type="SMR" id="Q6AUR2"/>
<dbReference type="FunCoup" id="Q6AUR2">
    <property type="interactions" value="362"/>
</dbReference>
<dbReference type="STRING" id="39947.Q6AUR2"/>
<dbReference type="PaxDb" id="39947-Q6AUR2"/>
<dbReference type="EnsemblPlants" id="Os05t0133100-01">
    <property type="protein sequence ID" value="Os05t0133100-01"/>
    <property type="gene ID" value="Os05g0133100"/>
</dbReference>
<dbReference type="Gramene" id="Os05t0133100-01">
    <property type="protein sequence ID" value="Os05t0133100-01"/>
    <property type="gene ID" value="Os05g0133100"/>
</dbReference>
<dbReference type="KEGG" id="dosa:Os05g0133100"/>
<dbReference type="eggNOG" id="ENOG502RUKA">
    <property type="taxonomic scope" value="Eukaryota"/>
</dbReference>
<dbReference type="HOGENOM" id="CLU_082268_1_0_1"/>
<dbReference type="InParanoid" id="Q6AUR2"/>
<dbReference type="OMA" id="MTGGRTD"/>
<dbReference type="OrthoDB" id="2016645at2759"/>
<dbReference type="Proteomes" id="UP000000763">
    <property type="component" value="Chromosome 5"/>
</dbReference>
<dbReference type="Proteomes" id="UP000007752">
    <property type="component" value="Chromosome 5"/>
</dbReference>
<dbReference type="Proteomes" id="UP000059680">
    <property type="component" value="Chromosome 5"/>
</dbReference>
<dbReference type="GO" id="GO:0009507">
    <property type="term" value="C:chloroplast"/>
    <property type="evidence" value="ECO:0007669"/>
    <property type="project" value="UniProtKB-SubCell"/>
</dbReference>
<dbReference type="GO" id="GO:0005829">
    <property type="term" value="C:cytosol"/>
    <property type="evidence" value="ECO:0000318"/>
    <property type="project" value="GO_Central"/>
</dbReference>
<dbReference type="GO" id="GO:0010307">
    <property type="term" value="F:acetylglutamate kinase regulator activity"/>
    <property type="evidence" value="ECO:0007669"/>
    <property type="project" value="EnsemblPlants"/>
</dbReference>
<dbReference type="GO" id="GO:0005524">
    <property type="term" value="F:ATP binding"/>
    <property type="evidence" value="ECO:0000318"/>
    <property type="project" value="GO_Central"/>
</dbReference>
<dbReference type="GO" id="GO:0030234">
    <property type="term" value="F:enzyme regulator activity"/>
    <property type="evidence" value="ECO:0000318"/>
    <property type="project" value="GO_Central"/>
</dbReference>
<dbReference type="GO" id="GO:0000287">
    <property type="term" value="F:magnesium ion binding"/>
    <property type="evidence" value="ECO:0007669"/>
    <property type="project" value="EnsemblPlants"/>
</dbReference>
<dbReference type="GO" id="GO:0009718">
    <property type="term" value="P:anthocyanin-containing compound biosynthetic process"/>
    <property type="evidence" value="ECO:0007669"/>
    <property type="project" value="EnsemblPlants"/>
</dbReference>
<dbReference type="GO" id="GO:0042304">
    <property type="term" value="P:regulation of fatty acid biosynthetic process"/>
    <property type="evidence" value="ECO:0007669"/>
    <property type="project" value="EnsemblPlants"/>
</dbReference>
<dbReference type="GO" id="GO:0006808">
    <property type="term" value="P:regulation of nitrogen utilization"/>
    <property type="evidence" value="ECO:0000318"/>
    <property type="project" value="GO_Central"/>
</dbReference>
<dbReference type="GO" id="GO:0009416">
    <property type="term" value="P:response to light stimulus"/>
    <property type="evidence" value="ECO:0007669"/>
    <property type="project" value="EnsemblPlants"/>
</dbReference>
<dbReference type="GO" id="GO:0009744">
    <property type="term" value="P:response to sucrose"/>
    <property type="evidence" value="ECO:0007669"/>
    <property type="project" value="EnsemblPlants"/>
</dbReference>
<dbReference type="Gene3D" id="3.30.70.120">
    <property type="match status" value="1"/>
</dbReference>
<dbReference type="InterPro" id="IPR002187">
    <property type="entry name" value="N-reg_PII"/>
</dbReference>
<dbReference type="InterPro" id="IPR011322">
    <property type="entry name" value="N-reg_PII-like_a/b"/>
</dbReference>
<dbReference type="InterPro" id="IPR015867">
    <property type="entry name" value="N-reg_PII/ATP_PRibTrfase_C"/>
</dbReference>
<dbReference type="InterPro" id="IPR017918">
    <property type="entry name" value="N-reg_PII_CS"/>
</dbReference>
<dbReference type="PANTHER" id="PTHR30115">
    <property type="entry name" value="NITROGEN REGULATORY PROTEIN P-II"/>
    <property type="match status" value="1"/>
</dbReference>
<dbReference type="PANTHER" id="PTHR30115:SF11">
    <property type="entry name" value="NITROGEN REGULATORY PROTEIN P-II HOMOLOG"/>
    <property type="match status" value="1"/>
</dbReference>
<dbReference type="Pfam" id="PF00543">
    <property type="entry name" value="P-II"/>
    <property type="match status" value="1"/>
</dbReference>
<dbReference type="PRINTS" id="PR00340">
    <property type="entry name" value="PIIGLNB"/>
</dbReference>
<dbReference type="SMART" id="SM00938">
    <property type="entry name" value="P-II"/>
    <property type="match status" value="1"/>
</dbReference>
<dbReference type="SUPFAM" id="SSF54913">
    <property type="entry name" value="GlnB-like"/>
    <property type="match status" value="1"/>
</dbReference>
<dbReference type="PROSITE" id="PS00638">
    <property type="entry name" value="PII_GLNB_CTER"/>
    <property type="match status" value="1"/>
</dbReference>
<dbReference type="PROSITE" id="PS51343">
    <property type="entry name" value="PII_GLNB_DOM"/>
    <property type="match status" value="1"/>
</dbReference>
<organism>
    <name type="scientific">Oryza sativa subsp. japonica</name>
    <name type="common">Rice</name>
    <dbReference type="NCBI Taxonomy" id="39947"/>
    <lineage>
        <taxon>Eukaryota</taxon>
        <taxon>Viridiplantae</taxon>
        <taxon>Streptophyta</taxon>
        <taxon>Embryophyta</taxon>
        <taxon>Tracheophyta</taxon>
        <taxon>Spermatophyta</taxon>
        <taxon>Magnoliopsida</taxon>
        <taxon>Liliopsida</taxon>
        <taxon>Poales</taxon>
        <taxon>Poaceae</taxon>
        <taxon>BOP clade</taxon>
        <taxon>Oryzoideae</taxon>
        <taxon>Oryzeae</taxon>
        <taxon>Oryzinae</taxon>
        <taxon>Oryza</taxon>
        <taxon>Oryza sativa</taxon>
    </lineage>
</organism>
<accession>Q6AUR2</accession>
<accession>A0A0P0WHM7</accession>
<sequence length="212" mass="22701">MSSPATAAAAAASCGVLRHHHPPASPRPPPTTTTTTSRLLLASRSRGLQRPLRVNHAPPRRLPPTAARAQSAAAAGYQPESEFYKVEAILRPWRVPYVSSGLLQMGIRGVTVSDVRGFGAQGGSTERHEGSEFAEDTFIDKVKMEIVVSKDQVEAVVDKIIEKARTGEIGDGKIFLIPVSDVIRIRTGERGERAERMAGGLADKLSSAMPIS</sequence>
<name>GLNB_ORYSJ</name>
<evidence type="ECO:0000250" key="1"/>
<evidence type="ECO:0000255" key="2"/>
<evidence type="ECO:0000255" key="3">
    <source>
        <dbReference type="PROSITE-ProRule" id="PRU00675"/>
    </source>
</evidence>
<evidence type="ECO:0000256" key="4">
    <source>
        <dbReference type="SAM" id="MobiDB-lite"/>
    </source>
</evidence>
<reference key="1">
    <citation type="journal article" date="2004" name="Plant Cell Physiol.">
        <title>Interaction of N-acetylglutamate kinase with a PII-like protein in rice.</title>
        <authorList>
            <person name="Sugiyama K."/>
            <person name="Hayakawa T."/>
            <person name="Kudo T."/>
            <person name="Ito T."/>
            <person name="Yamaya T."/>
        </authorList>
    </citation>
    <scope>NUCLEOTIDE SEQUENCE [MRNA]</scope>
    <source>
        <strain>cv. Sasanishiki</strain>
        <tissue>Leaf</tissue>
    </source>
</reference>
<reference key="2">
    <citation type="journal article" date="2005" name="Mol. Genet. Genomics">
        <title>A fine physical map of the rice chromosome 5.</title>
        <authorList>
            <person name="Cheng C.-H."/>
            <person name="Chung M.C."/>
            <person name="Liu S.-M."/>
            <person name="Chen S.-K."/>
            <person name="Kao F.Y."/>
            <person name="Lin S.-J."/>
            <person name="Hsiao S.-H."/>
            <person name="Tseng I.C."/>
            <person name="Hsing Y.-I.C."/>
            <person name="Wu H.-P."/>
            <person name="Chen C.-S."/>
            <person name="Shaw J.-F."/>
            <person name="Wu J."/>
            <person name="Matsumoto T."/>
            <person name="Sasaki T."/>
            <person name="Chen H.-C."/>
            <person name="Chow T.-Y."/>
        </authorList>
    </citation>
    <scope>NUCLEOTIDE SEQUENCE [LARGE SCALE GENOMIC DNA]</scope>
    <source>
        <strain>cv. Nipponbare</strain>
        <tissue>Green leaf</tissue>
    </source>
</reference>
<reference key="3">
    <citation type="journal article" date="2005" name="Nature">
        <title>The map-based sequence of the rice genome.</title>
        <authorList>
            <consortium name="International rice genome sequencing project (IRGSP)"/>
        </authorList>
    </citation>
    <scope>NUCLEOTIDE SEQUENCE [LARGE SCALE GENOMIC DNA]</scope>
    <source>
        <strain>cv. Nipponbare</strain>
    </source>
</reference>
<reference key="4">
    <citation type="journal article" date="2008" name="Nucleic Acids Res.">
        <title>The rice annotation project database (RAP-DB): 2008 update.</title>
        <authorList>
            <consortium name="The rice annotation project (RAP)"/>
        </authorList>
    </citation>
    <scope>GENOME REANNOTATION</scope>
    <source>
        <strain>cv. Nipponbare</strain>
    </source>
</reference>
<reference key="5">
    <citation type="journal article" date="2013" name="Rice">
        <title>Improvement of the Oryza sativa Nipponbare reference genome using next generation sequence and optical map data.</title>
        <authorList>
            <person name="Kawahara Y."/>
            <person name="de la Bastide M."/>
            <person name="Hamilton J.P."/>
            <person name="Kanamori H."/>
            <person name="McCombie W.R."/>
            <person name="Ouyang S."/>
            <person name="Schwartz D.C."/>
            <person name="Tanaka T."/>
            <person name="Wu J."/>
            <person name="Zhou S."/>
            <person name="Childs K.L."/>
            <person name="Davidson R.M."/>
            <person name="Lin H."/>
            <person name="Quesada-Ocampo L."/>
            <person name="Vaillancourt B."/>
            <person name="Sakai H."/>
            <person name="Lee S.S."/>
            <person name="Kim J."/>
            <person name="Numa H."/>
            <person name="Itoh T."/>
            <person name="Buell C.R."/>
            <person name="Matsumoto T."/>
        </authorList>
    </citation>
    <scope>GENOME REANNOTATION</scope>
    <source>
        <strain>cv. Nipponbare</strain>
    </source>
</reference>
<reference key="6">
    <citation type="journal article" date="2005" name="PLoS Biol.">
        <title>The genomes of Oryza sativa: a history of duplications.</title>
        <authorList>
            <person name="Yu J."/>
            <person name="Wang J."/>
            <person name="Lin W."/>
            <person name="Li S."/>
            <person name="Li H."/>
            <person name="Zhou J."/>
            <person name="Ni P."/>
            <person name="Dong W."/>
            <person name="Hu S."/>
            <person name="Zeng C."/>
            <person name="Zhang J."/>
            <person name="Zhang Y."/>
            <person name="Li R."/>
            <person name="Xu Z."/>
            <person name="Li S."/>
            <person name="Li X."/>
            <person name="Zheng H."/>
            <person name="Cong L."/>
            <person name="Lin L."/>
            <person name="Yin J."/>
            <person name="Geng J."/>
            <person name="Li G."/>
            <person name="Shi J."/>
            <person name="Liu J."/>
            <person name="Lv H."/>
            <person name="Li J."/>
            <person name="Wang J."/>
            <person name="Deng Y."/>
            <person name="Ran L."/>
            <person name="Shi X."/>
            <person name="Wang X."/>
            <person name="Wu Q."/>
            <person name="Li C."/>
            <person name="Ren X."/>
            <person name="Wang J."/>
            <person name="Wang X."/>
            <person name="Li D."/>
            <person name="Liu D."/>
            <person name="Zhang X."/>
            <person name="Ji Z."/>
            <person name="Zhao W."/>
            <person name="Sun Y."/>
            <person name="Zhang Z."/>
            <person name="Bao J."/>
            <person name="Han Y."/>
            <person name="Dong L."/>
            <person name="Ji J."/>
            <person name="Chen P."/>
            <person name="Wu S."/>
            <person name="Liu J."/>
            <person name="Xiao Y."/>
            <person name="Bu D."/>
            <person name="Tan J."/>
            <person name="Yang L."/>
            <person name="Ye C."/>
            <person name="Zhang J."/>
            <person name="Xu J."/>
            <person name="Zhou Y."/>
            <person name="Yu Y."/>
            <person name="Zhang B."/>
            <person name="Zhuang S."/>
            <person name="Wei H."/>
            <person name="Liu B."/>
            <person name="Lei M."/>
            <person name="Yu H."/>
            <person name="Li Y."/>
            <person name="Xu H."/>
            <person name="Wei S."/>
            <person name="He X."/>
            <person name="Fang L."/>
            <person name="Zhang Z."/>
            <person name="Zhang Y."/>
            <person name="Huang X."/>
            <person name="Su Z."/>
            <person name="Tong W."/>
            <person name="Li J."/>
            <person name="Tong Z."/>
            <person name="Li S."/>
            <person name="Ye J."/>
            <person name="Wang L."/>
            <person name="Fang L."/>
            <person name="Lei T."/>
            <person name="Chen C.-S."/>
            <person name="Chen H.-C."/>
            <person name="Xu Z."/>
            <person name="Li H."/>
            <person name="Huang H."/>
            <person name="Zhang F."/>
            <person name="Xu H."/>
            <person name="Li N."/>
            <person name="Zhao C."/>
            <person name="Li S."/>
            <person name="Dong L."/>
            <person name="Huang Y."/>
            <person name="Li L."/>
            <person name="Xi Y."/>
            <person name="Qi Q."/>
            <person name="Li W."/>
            <person name="Zhang B."/>
            <person name="Hu W."/>
            <person name="Zhang Y."/>
            <person name="Tian X."/>
            <person name="Jiao Y."/>
            <person name="Liang X."/>
            <person name="Jin J."/>
            <person name="Gao L."/>
            <person name="Zheng W."/>
            <person name="Hao B."/>
            <person name="Liu S.-M."/>
            <person name="Wang W."/>
            <person name="Yuan L."/>
            <person name="Cao M."/>
            <person name="McDermott J."/>
            <person name="Samudrala R."/>
            <person name="Wang J."/>
            <person name="Wong G.K.-S."/>
            <person name="Yang H."/>
        </authorList>
    </citation>
    <scope>NUCLEOTIDE SEQUENCE [LARGE SCALE GENOMIC DNA]</scope>
    <source>
        <strain>cv. Nipponbare</strain>
    </source>
</reference>
<reference key="7">
    <citation type="journal article" date="2003" name="Science">
        <title>Collection, mapping, and annotation of over 28,000 cDNA clones from japonica rice.</title>
        <authorList>
            <consortium name="The rice full-length cDNA consortium"/>
        </authorList>
    </citation>
    <scope>NUCLEOTIDE SEQUENCE [LARGE SCALE MRNA]</scope>
    <source>
        <strain>cv. Nipponbare</strain>
    </source>
</reference>
<keyword id="KW-0067">ATP-binding</keyword>
<keyword id="KW-0150">Chloroplast</keyword>
<keyword id="KW-0460">Magnesium</keyword>
<keyword id="KW-0479">Metal-binding</keyword>
<keyword id="KW-0535">Nitrogen fixation</keyword>
<keyword id="KW-0547">Nucleotide-binding</keyword>
<keyword id="KW-0934">Plastid</keyword>
<keyword id="KW-1185">Reference proteome</keyword>
<keyword id="KW-0804">Transcription</keyword>
<keyword id="KW-0805">Transcription regulation</keyword>
<keyword id="KW-0809">Transit peptide</keyword>
<proteinExistence type="evidence at transcript level"/>